<reference key="1">
    <citation type="journal article" date="1998" name="Nature">
        <title>The complete genome of the hyperthermophilic bacterium Aquifex aeolicus.</title>
        <authorList>
            <person name="Deckert G."/>
            <person name="Warren P.V."/>
            <person name="Gaasterland T."/>
            <person name="Young W.G."/>
            <person name="Lenox A.L."/>
            <person name="Graham D.E."/>
            <person name="Overbeek R."/>
            <person name="Snead M.A."/>
            <person name="Keller M."/>
            <person name="Aujay M."/>
            <person name="Huber R."/>
            <person name="Feldman R.A."/>
            <person name="Short J.M."/>
            <person name="Olsen G.J."/>
            <person name="Swanson R.V."/>
        </authorList>
    </citation>
    <scope>NUCLEOTIDE SEQUENCE [LARGE SCALE GENOMIC DNA]</scope>
    <source>
        <strain>VF5</strain>
    </source>
</reference>
<accession>O67054</accession>
<name>GMHA_AQUAE</name>
<protein>
    <recommendedName>
        <fullName evidence="1">Phosphoheptose isomerase</fullName>
        <ecNumber evidence="1">5.3.1.28</ecNumber>
    </recommendedName>
    <alternativeName>
        <fullName evidence="1">Sedoheptulose 7-phosphate isomerase</fullName>
    </alternativeName>
</protein>
<dbReference type="EC" id="5.3.1.28" evidence="1"/>
<dbReference type="EMBL" id="AE000657">
    <property type="protein sequence ID" value="AAC07009.1"/>
    <property type="molecule type" value="Genomic_DNA"/>
</dbReference>
<dbReference type="PIR" id="C70378">
    <property type="entry name" value="C70378"/>
</dbReference>
<dbReference type="RefSeq" id="NP_213616.1">
    <property type="nucleotide sequence ID" value="NC_000918.1"/>
</dbReference>
<dbReference type="RefSeq" id="WP_010880554.1">
    <property type="nucleotide sequence ID" value="NC_000918.1"/>
</dbReference>
<dbReference type="SMR" id="O67054"/>
<dbReference type="FunCoup" id="O67054">
    <property type="interactions" value="169"/>
</dbReference>
<dbReference type="STRING" id="224324.aq_908"/>
<dbReference type="EnsemblBacteria" id="AAC07009">
    <property type="protein sequence ID" value="AAC07009"/>
    <property type="gene ID" value="aq_908"/>
</dbReference>
<dbReference type="KEGG" id="aae:aq_908"/>
<dbReference type="eggNOG" id="COG0279">
    <property type="taxonomic scope" value="Bacteria"/>
</dbReference>
<dbReference type="HOGENOM" id="CLU_080999_4_0_0"/>
<dbReference type="InParanoid" id="O67054"/>
<dbReference type="OrthoDB" id="9781311at2"/>
<dbReference type="UniPathway" id="UPA00041">
    <property type="reaction ID" value="UER00436"/>
</dbReference>
<dbReference type="Proteomes" id="UP000000798">
    <property type="component" value="Chromosome"/>
</dbReference>
<dbReference type="GO" id="GO:0005737">
    <property type="term" value="C:cytoplasm"/>
    <property type="evidence" value="ECO:0007669"/>
    <property type="project" value="UniProtKB-SubCell"/>
</dbReference>
<dbReference type="GO" id="GO:1990102">
    <property type="term" value="C:DnaA-DiaA complex"/>
    <property type="evidence" value="ECO:0000318"/>
    <property type="project" value="GO_Central"/>
</dbReference>
<dbReference type="GO" id="GO:0097367">
    <property type="term" value="F:carbohydrate derivative binding"/>
    <property type="evidence" value="ECO:0007669"/>
    <property type="project" value="InterPro"/>
</dbReference>
<dbReference type="GO" id="GO:0008968">
    <property type="term" value="F:D-sedoheptulose 7-phosphate isomerase activity"/>
    <property type="evidence" value="ECO:0007669"/>
    <property type="project" value="UniProtKB-UniRule"/>
</dbReference>
<dbReference type="GO" id="GO:0008270">
    <property type="term" value="F:zinc ion binding"/>
    <property type="evidence" value="ECO:0007669"/>
    <property type="project" value="UniProtKB-UniRule"/>
</dbReference>
<dbReference type="GO" id="GO:0005975">
    <property type="term" value="P:carbohydrate metabolic process"/>
    <property type="evidence" value="ECO:0007669"/>
    <property type="project" value="UniProtKB-UniRule"/>
</dbReference>
<dbReference type="GO" id="GO:2001061">
    <property type="term" value="P:D-glycero-D-manno-heptose 7-phosphate biosynthetic process"/>
    <property type="evidence" value="ECO:0007669"/>
    <property type="project" value="UniProtKB-UniPathway"/>
</dbReference>
<dbReference type="GO" id="GO:0032298">
    <property type="term" value="P:positive regulation of DNA-templated DNA replication initiation"/>
    <property type="evidence" value="ECO:0000318"/>
    <property type="project" value="GO_Central"/>
</dbReference>
<dbReference type="CDD" id="cd05006">
    <property type="entry name" value="SIS_GmhA"/>
    <property type="match status" value="1"/>
</dbReference>
<dbReference type="Gene3D" id="3.40.50.10490">
    <property type="entry name" value="Glucose-6-phosphate isomerase like protein, domain 1"/>
    <property type="match status" value="1"/>
</dbReference>
<dbReference type="HAMAP" id="MF_00067">
    <property type="entry name" value="GmhA"/>
    <property type="match status" value="1"/>
</dbReference>
<dbReference type="InterPro" id="IPR035461">
    <property type="entry name" value="GmhA/DiaA"/>
</dbReference>
<dbReference type="InterPro" id="IPR004515">
    <property type="entry name" value="Phosphoheptose_Isoase"/>
</dbReference>
<dbReference type="InterPro" id="IPR001347">
    <property type="entry name" value="SIS_dom"/>
</dbReference>
<dbReference type="InterPro" id="IPR046348">
    <property type="entry name" value="SIS_dom_sf"/>
</dbReference>
<dbReference type="InterPro" id="IPR050099">
    <property type="entry name" value="SIS_GmhA/DiaA_subfam"/>
</dbReference>
<dbReference type="PANTHER" id="PTHR30390:SF6">
    <property type="entry name" value="DNAA INITIATOR-ASSOCIATING PROTEIN DIAA"/>
    <property type="match status" value="1"/>
</dbReference>
<dbReference type="PANTHER" id="PTHR30390">
    <property type="entry name" value="SEDOHEPTULOSE 7-PHOSPHATE ISOMERASE / DNAA INITIATOR-ASSOCIATING FACTOR FOR REPLICATION INITIATION"/>
    <property type="match status" value="1"/>
</dbReference>
<dbReference type="Pfam" id="PF13580">
    <property type="entry name" value="SIS_2"/>
    <property type="match status" value="1"/>
</dbReference>
<dbReference type="SUPFAM" id="SSF53697">
    <property type="entry name" value="SIS domain"/>
    <property type="match status" value="1"/>
</dbReference>
<dbReference type="PROSITE" id="PS51464">
    <property type="entry name" value="SIS"/>
    <property type="match status" value="1"/>
</dbReference>
<proteinExistence type="inferred from homology"/>
<gene>
    <name evidence="1" type="primary">gmhA</name>
    <name type="ordered locus">aq_908</name>
</gene>
<feature type="chain" id="PRO_0000136517" description="Phosphoheptose isomerase">
    <location>
        <begin position="1"/>
        <end position="191"/>
    </location>
</feature>
<feature type="domain" description="SIS" evidence="1">
    <location>
        <begin position="34"/>
        <end position="191"/>
    </location>
</feature>
<feature type="binding site" evidence="1">
    <location>
        <begin position="49"/>
        <end position="51"/>
    </location>
    <ligand>
        <name>substrate</name>
    </ligand>
</feature>
<feature type="binding site" evidence="1">
    <location>
        <position position="58"/>
    </location>
    <ligand>
        <name>Zn(2+)</name>
        <dbReference type="ChEBI" id="CHEBI:29105"/>
    </ligand>
</feature>
<feature type="binding site" evidence="1">
    <location>
        <position position="62"/>
    </location>
    <ligand>
        <name>substrate</name>
    </ligand>
</feature>
<feature type="binding site" evidence="1">
    <location>
        <position position="62"/>
    </location>
    <ligand>
        <name>Zn(2+)</name>
        <dbReference type="ChEBI" id="CHEBI:29105"/>
    </ligand>
</feature>
<feature type="binding site" evidence="1">
    <location>
        <begin position="91"/>
        <end position="92"/>
    </location>
    <ligand>
        <name>substrate</name>
    </ligand>
</feature>
<feature type="binding site" evidence="1">
    <location>
        <begin position="117"/>
        <end position="119"/>
    </location>
    <ligand>
        <name>substrate</name>
    </ligand>
</feature>
<feature type="binding site" evidence="1">
    <location>
        <position position="122"/>
    </location>
    <ligand>
        <name>substrate</name>
    </ligand>
</feature>
<feature type="binding site" evidence="1">
    <location>
        <position position="169"/>
    </location>
    <ligand>
        <name>substrate</name>
    </ligand>
</feature>
<feature type="binding site" evidence="1">
    <location>
        <position position="169"/>
    </location>
    <ligand>
        <name>Zn(2+)</name>
        <dbReference type="ChEBI" id="CHEBI:29105"/>
    </ligand>
</feature>
<feature type="binding site" evidence="1">
    <location>
        <position position="177"/>
    </location>
    <ligand>
        <name>Zn(2+)</name>
        <dbReference type="ChEBI" id="CHEBI:29105"/>
    </ligand>
</feature>
<comment type="function">
    <text evidence="1">Catalyzes the isomerization of sedoheptulose 7-phosphate in D-glycero-D-manno-heptose 7-phosphate.</text>
</comment>
<comment type="catalytic activity">
    <reaction evidence="1">
        <text>2 D-sedoheptulose 7-phosphate = D-glycero-alpha-D-manno-heptose 7-phosphate + D-glycero-beta-D-manno-heptose 7-phosphate</text>
        <dbReference type="Rhea" id="RHEA:27489"/>
        <dbReference type="ChEBI" id="CHEBI:57483"/>
        <dbReference type="ChEBI" id="CHEBI:60203"/>
        <dbReference type="ChEBI" id="CHEBI:60204"/>
        <dbReference type="EC" id="5.3.1.28"/>
    </reaction>
</comment>
<comment type="cofactor">
    <cofactor evidence="1">
        <name>Zn(2+)</name>
        <dbReference type="ChEBI" id="CHEBI:29105"/>
    </cofactor>
    <text evidence="1">Binds 1 zinc ion per subunit.</text>
</comment>
<comment type="pathway">
    <text evidence="1">Carbohydrate biosynthesis; D-glycero-D-manno-heptose 7-phosphate biosynthesis; D-glycero-alpha-D-manno-heptose 7-phosphate and D-glycero-beta-D-manno-heptose 7-phosphate from sedoheptulose 7-phosphate: step 1/1.</text>
</comment>
<comment type="subcellular location">
    <subcellularLocation>
        <location evidence="1">Cytoplasm</location>
    </subcellularLocation>
</comment>
<comment type="miscellaneous">
    <text evidence="1">The reaction produces a racemic mixture of D-glycero-alpha-D-manno-heptose 7-phosphate and D-glycero-beta-D-manno-heptose 7-phosphate.</text>
</comment>
<comment type="similarity">
    <text evidence="1">Belongs to the SIS family. GmhA subfamily.</text>
</comment>
<sequence length="191" mass="20706">MLEKVKKIFRESAEVKLAFVELYAQQIVDVAGIIATALKDGNKVLLFGNGGSAADAQHIAAELVGRFKKERRPLPAIALTTDTSILTALGNDYGFETIFERQVEALCMPGDVAIGITTSGNSENVIRGLKKAHDLGATTIAFTGRNGGKVAQIAHYTFIVPSYETQRIQECHITLGHVLCELVEEMVCERS</sequence>
<organism>
    <name type="scientific">Aquifex aeolicus (strain VF5)</name>
    <dbReference type="NCBI Taxonomy" id="224324"/>
    <lineage>
        <taxon>Bacteria</taxon>
        <taxon>Pseudomonadati</taxon>
        <taxon>Aquificota</taxon>
        <taxon>Aquificia</taxon>
        <taxon>Aquificales</taxon>
        <taxon>Aquificaceae</taxon>
        <taxon>Aquifex</taxon>
    </lineage>
</organism>
<keyword id="KW-0119">Carbohydrate metabolism</keyword>
<keyword id="KW-0963">Cytoplasm</keyword>
<keyword id="KW-0413">Isomerase</keyword>
<keyword id="KW-0479">Metal-binding</keyword>
<keyword id="KW-1185">Reference proteome</keyword>
<keyword id="KW-0862">Zinc</keyword>
<evidence type="ECO:0000255" key="1">
    <source>
        <dbReference type="HAMAP-Rule" id="MF_00067"/>
    </source>
</evidence>